<gene>
    <name evidence="1" type="primary">argH</name>
    <name type="ordered locus">lpg0495</name>
</gene>
<accession>Q5ZY77</accession>
<feature type="chain" id="PRO_0000240738" description="Argininosuccinate lyase">
    <location>
        <begin position="1"/>
        <end position="411"/>
    </location>
</feature>
<organism>
    <name type="scientific">Legionella pneumophila subsp. pneumophila (strain Philadelphia 1 / ATCC 33152 / DSM 7513)</name>
    <dbReference type="NCBI Taxonomy" id="272624"/>
    <lineage>
        <taxon>Bacteria</taxon>
        <taxon>Pseudomonadati</taxon>
        <taxon>Pseudomonadota</taxon>
        <taxon>Gammaproteobacteria</taxon>
        <taxon>Legionellales</taxon>
        <taxon>Legionellaceae</taxon>
        <taxon>Legionella</taxon>
    </lineage>
</organism>
<evidence type="ECO:0000255" key="1">
    <source>
        <dbReference type="HAMAP-Rule" id="MF_00006"/>
    </source>
</evidence>
<evidence type="ECO:0000305" key="2"/>
<dbReference type="EC" id="4.3.2.1" evidence="1"/>
<dbReference type="EMBL" id="AE017354">
    <property type="protein sequence ID" value="AAU26592.1"/>
    <property type="status" value="ALT_INIT"/>
    <property type="molecule type" value="Genomic_DNA"/>
</dbReference>
<dbReference type="RefSeq" id="WP_015444810.1">
    <property type="nucleotide sequence ID" value="NC_002942.5"/>
</dbReference>
<dbReference type="RefSeq" id="YP_094539.1">
    <property type="nucleotide sequence ID" value="NC_002942.5"/>
</dbReference>
<dbReference type="SMR" id="Q5ZY77"/>
<dbReference type="STRING" id="272624.lpg0495"/>
<dbReference type="PaxDb" id="272624-lpg0495"/>
<dbReference type="GeneID" id="57034495"/>
<dbReference type="KEGG" id="lpn:lpg0495"/>
<dbReference type="PATRIC" id="fig|272624.6.peg.516"/>
<dbReference type="eggNOG" id="COG0165">
    <property type="taxonomic scope" value="Bacteria"/>
</dbReference>
<dbReference type="HOGENOM" id="CLU_027272_2_3_6"/>
<dbReference type="OrthoDB" id="9769623at2"/>
<dbReference type="UniPathway" id="UPA00068">
    <property type="reaction ID" value="UER00114"/>
</dbReference>
<dbReference type="Proteomes" id="UP000000609">
    <property type="component" value="Chromosome"/>
</dbReference>
<dbReference type="GO" id="GO:0005829">
    <property type="term" value="C:cytosol"/>
    <property type="evidence" value="ECO:0007669"/>
    <property type="project" value="TreeGrafter"/>
</dbReference>
<dbReference type="GO" id="GO:0004056">
    <property type="term" value="F:argininosuccinate lyase activity"/>
    <property type="evidence" value="ECO:0007669"/>
    <property type="project" value="UniProtKB-UniRule"/>
</dbReference>
<dbReference type="GO" id="GO:0042450">
    <property type="term" value="P:arginine biosynthetic process via ornithine"/>
    <property type="evidence" value="ECO:0007669"/>
    <property type="project" value="InterPro"/>
</dbReference>
<dbReference type="GO" id="GO:0006526">
    <property type="term" value="P:L-arginine biosynthetic process"/>
    <property type="evidence" value="ECO:0007669"/>
    <property type="project" value="UniProtKB-UniRule"/>
</dbReference>
<dbReference type="CDD" id="cd01359">
    <property type="entry name" value="Argininosuccinate_lyase"/>
    <property type="match status" value="1"/>
</dbReference>
<dbReference type="FunFam" id="1.10.275.10:FF:000002">
    <property type="entry name" value="Argininosuccinate lyase"/>
    <property type="match status" value="1"/>
</dbReference>
<dbReference type="FunFam" id="1.20.200.10:FF:000015">
    <property type="entry name" value="argininosuccinate lyase isoform X2"/>
    <property type="match status" value="1"/>
</dbReference>
<dbReference type="Gene3D" id="1.10.40.30">
    <property type="entry name" value="Fumarase/aspartase (C-terminal domain)"/>
    <property type="match status" value="1"/>
</dbReference>
<dbReference type="Gene3D" id="1.20.200.10">
    <property type="entry name" value="Fumarase/aspartase (Central domain)"/>
    <property type="match status" value="1"/>
</dbReference>
<dbReference type="Gene3D" id="1.10.275.10">
    <property type="entry name" value="Fumarase/aspartase (N-terminal domain)"/>
    <property type="match status" value="1"/>
</dbReference>
<dbReference type="HAMAP" id="MF_00006">
    <property type="entry name" value="Arg_succ_lyase"/>
    <property type="match status" value="1"/>
</dbReference>
<dbReference type="InterPro" id="IPR029419">
    <property type="entry name" value="Arg_succ_lyase_C"/>
</dbReference>
<dbReference type="InterPro" id="IPR009049">
    <property type="entry name" value="Argininosuccinate_lyase"/>
</dbReference>
<dbReference type="InterPro" id="IPR024083">
    <property type="entry name" value="Fumarase/histidase_N"/>
</dbReference>
<dbReference type="InterPro" id="IPR020557">
    <property type="entry name" value="Fumarate_lyase_CS"/>
</dbReference>
<dbReference type="InterPro" id="IPR000362">
    <property type="entry name" value="Fumarate_lyase_fam"/>
</dbReference>
<dbReference type="InterPro" id="IPR022761">
    <property type="entry name" value="Fumarate_lyase_N"/>
</dbReference>
<dbReference type="InterPro" id="IPR008948">
    <property type="entry name" value="L-Aspartase-like"/>
</dbReference>
<dbReference type="NCBIfam" id="TIGR00838">
    <property type="entry name" value="argH"/>
    <property type="match status" value="1"/>
</dbReference>
<dbReference type="PANTHER" id="PTHR43814">
    <property type="entry name" value="ARGININOSUCCINATE LYASE"/>
    <property type="match status" value="1"/>
</dbReference>
<dbReference type="PANTHER" id="PTHR43814:SF1">
    <property type="entry name" value="ARGININOSUCCINATE LYASE"/>
    <property type="match status" value="1"/>
</dbReference>
<dbReference type="Pfam" id="PF14698">
    <property type="entry name" value="ASL_C2"/>
    <property type="match status" value="1"/>
</dbReference>
<dbReference type="Pfam" id="PF00206">
    <property type="entry name" value="Lyase_1"/>
    <property type="match status" value="1"/>
</dbReference>
<dbReference type="PRINTS" id="PR00145">
    <property type="entry name" value="ARGSUCLYASE"/>
</dbReference>
<dbReference type="PRINTS" id="PR00149">
    <property type="entry name" value="FUMRATELYASE"/>
</dbReference>
<dbReference type="SUPFAM" id="SSF48557">
    <property type="entry name" value="L-aspartase-like"/>
    <property type="match status" value="1"/>
</dbReference>
<dbReference type="PROSITE" id="PS00163">
    <property type="entry name" value="FUMARATE_LYASES"/>
    <property type="match status" value="1"/>
</dbReference>
<proteinExistence type="inferred from homology"/>
<protein>
    <recommendedName>
        <fullName evidence="1">Argininosuccinate lyase</fullName>
        <shortName evidence="1">ASAL</shortName>
        <ecNumber evidence="1">4.3.2.1</ecNumber>
    </recommendedName>
    <alternativeName>
        <fullName evidence="1">Arginosuccinase</fullName>
    </alternativeName>
</protein>
<comment type="catalytic activity">
    <reaction evidence="1">
        <text>2-(N(omega)-L-arginino)succinate = fumarate + L-arginine</text>
        <dbReference type="Rhea" id="RHEA:24020"/>
        <dbReference type="ChEBI" id="CHEBI:29806"/>
        <dbReference type="ChEBI" id="CHEBI:32682"/>
        <dbReference type="ChEBI" id="CHEBI:57472"/>
        <dbReference type="EC" id="4.3.2.1"/>
    </reaction>
</comment>
<comment type="pathway">
    <text evidence="1">Amino-acid biosynthesis; L-arginine biosynthesis; L-arginine from L-ornithine and carbamoyl phosphate: step 3/3.</text>
</comment>
<comment type="subcellular location">
    <subcellularLocation>
        <location evidence="1">Cytoplasm</location>
    </subcellularLocation>
</comment>
<comment type="similarity">
    <text evidence="1">Belongs to the lyase 1 family. Argininosuccinate lyase subfamily.</text>
</comment>
<comment type="sequence caution" evidence="2">
    <conflict type="erroneous initiation">
        <sequence resource="EMBL-CDS" id="AAU26592"/>
    </conflict>
</comment>
<reference key="1">
    <citation type="journal article" date="2004" name="Science">
        <title>The genomic sequence of the accidental pathogen Legionella pneumophila.</title>
        <authorList>
            <person name="Chien M."/>
            <person name="Morozova I."/>
            <person name="Shi S."/>
            <person name="Sheng H."/>
            <person name="Chen J."/>
            <person name="Gomez S.M."/>
            <person name="Asamani G."/>
            <person name="Hill K."/>
            <person name="Nuara J."/>
            <person name="Feder M."/>
            <person name="Rineer J."/>
            <person name="Greenberg J.J."/>
            <person name="Steshenko V."/>
            <person name="Park S.H."/>
            <person name="Zhao B."/>
            <person name="Teplitskaya E."/>
            <person name="Edwards J.R."/>
            <person name="Pampou S."/>
            <person name="Georghiou A."/>
            <person name="Chou I.-C."/>
            <person name="Iannuccilli W."/>
            <person name="Ulz M.E."/>
            <person name="Kim D.H."/>
            <person name="Geringer-Sameth A."/>
            <person name="Goldsberry C."/>
            <person name="Morozov P."/>
            <person name="Fischer S.G."/>
            <person name="Segal G."/>
            <person name="Qu X."/>
            <person name="Rzhetsky A."/>
            <person name="Zhang P."/>
            <person name="Cayanis E."/>
            <person name="De Jong P.J."/>
            <person name="Ju J."/>
            <person name="Kalachikov S."/>
            <person name="Shuman H.A."/>
            <person name="Russo J.J."/>
        </authorList>
    </citation>
    <scope>NUCLEOTIDE SEQUENCE [LARGE SCALE GENOMIC DNA]</scope>
    <source>
        <strain>Philadelphia 1 / ATCC 33152 / DSM 7513</strain>
    </source>
</reference>
<keyword id="KW-0028">Amino-acid biosynthesis</keyword>
<keyword id="KW-0055">Arginine biosynthesis</keyword>
<keyword id="KW-0963">Cytoplasm</keyword>
<keyword id="KW-0456">Lyase</keyword>
<keyword id="KW-1185">Reference proteome</keyword>
<sequence>MTNKTWGGRFKKSLDSSVNQFNASLSFDHVLFDQDINGSQVHVKQLAKQKILTEAECQEIYSALEEIRTEIKQGQYSFNERDEEDIHMFIEQLLIQKIGDLGKKLHTGRSRNDQVALDLRLYTRDKGCLINELLTRLIDCLDDLTSKHQQDLMPGYTHLQQAQPVTLGAYFNAYQCMFSRDKSRLEDWFKRMNYSPLGAGALAGSTLPLDREWVAESLGFAGIIPNTLDAVSDRDFVIELCSVAAMIMMHLSRLCEDLILWSTQEFNFVTLDDAFATGSSLMPNKKNPDVPELIRGKSGRVYGHLMAILTVMKGLPLAYNKDMQEDKEGLFDTINTIIVCLQMITPFLQSLTFNTPLMRTKAQSGYLDATAILESLVMKGMPFRDAHHQVGAWIAEAIEKQCSLNELLKGG</sequence>
<name>ARLY_LEGPH</name>